<comment type="function">
    <text evidence="2">Essential for DNA excision. Site specific recombinase necessary for the excision of the 11 kb nifD element during heterocyst differentiation.</text>
</comment>
<comment type="similarity">
    <text evidence="3">Belongs to the XisA/XisC recombinase family.</text>
</comment>
<proteinExistence type="inferred from homology"/>
<gene>
    <name type="primary">xisA</name>
    <name type="ordered locus">alr1442</name>
</gene>
<accession>P08862</accession>
<accession>Q44136</accession>
<sequence length="472" mass="55228">MQNQGQDKYQQAFADLEPLSSTDGSFLGSSLQAQQQREHMRTKVLQDLDKVNLRLKSAKTKVSVRESNGSLQLRATLPIKPGDKDTNGTGRKQYNLSLNIPANLDGLKTAEEEAYELGKLIARKTFEWNDKYLGKEATKKDSQTIGDLLEKFAEEYFKTHKRTTKSEHTFFYYFSRTQRYTNSKDLATAENLINSIEQIDKEWARYNAARAISAFCITFNIEIDLSQYSKMPDRNSRNIPTDAEILSGITKFEDYLVTRGNQVNEDVKDSWQLWRWTYGMLAVFGLRPREIFINPNIDWWLSKENIDLTWKVDKECKTGERQALPLHKEWIDEFDLRNPKYLEMLATAISKKDKTNHAEITALTQRISWWFRKVELDFKPYDLRHAWAIRAHILGIPIKAAADNLGHSMQVHTQTYQRWFSLDMRKLAINQALTKRNEFEVIREENAKLQIENERLRMEIEKLKMEIAYKNS</sequence>
<reference key="1">
    <citation type="journal article" date="1986" name="Cell">
        <title>Identification and sequence of a gene required for a developmentally regulated DNA excision in Anabaena.</title>
        <authorList>
            <person name="Lammers P.J."/>
            <person name="Golden J.W."/>
            <person name="Haselkorn R."/>
        </authorList>
    </citation>
    <scope>PRELIMINARY NUCLEOTIDE SEQUENCE [GENOMIC DNA]</scope>
</reference>
<reference key="2">
    <citation type="submission" date="1998-12" db="EMBL/GenBank/DDBJ databases">
        <authorList>
            <person name="Carrasco C.D."/>
            <person name="Golden J.W."/>
        </authorList>
    </citation>
    <scope>SEQUENCE REVISION</scope>
</reference>
<reference key="3">
    <citation type="journal article" date="2001" name="DNA Res.">
        <title>Complete genomic sequence of the filamentous nitrogen-fixing cyanobacterium Anabaena sp. strain PCC 7120.</title>
        <authorList>
            <person name="Kaneko T."/>
            <person name="Nakamura Y."/>
            <person name="Wolk C.P."/>
            <person name="Kuritz T."/>
            <person name="Sasamoto S."/>
            <person name="Watanabe A."/>
            <person name="Iriguchi M."/>
            <person name="Ishikawa A."/>
            <person name="Kawashima K."/>
            <person name="Kimura T."/>
            <person name="Kishida Y."/>
            <person name="Kohara M."/>
            <person name="Matsumoto M."/>
            <person name="Matsuno A."/>
            <person name="Muraki A."/>
            <person name="Nakazaki N."/>
            <person name="Shimpo S."/>
            <person name="Sugimoto M."/>
            <person name="Takazawa M."/>
            <person name="Yamada M."/>
            <person name="Yasuda M."/>
            <person name="Tabata S."/>
        </authorList>
    </citation>
    <scope>NUCLEOTIDE SEQUENCE [LARGE SCALE GENOMIC DNA]</scope>
    <source>
        <strain>PCC 7120 / SAG 25.82 / UTEX 2576</strain>
    </source>
</reference>
<reference key="4">
    <citation type="journal article" date="1988" name="Science">
        <title>Genome rearrangement and nitrogen fixation in Anabaena blocked by inactivation of xisA gene.</title>
        <authorList>
            <person name="Golden J.W."/>
            <person name="Wiest D.R."/>
        </authorList>
    </citation>
    <scope>FUNCTION</scope>
</reference>
<evidence type="ECO:0000255" key="1">
    <source>
        <dbReference type="PROSITE-ProRule" id="PRU01246"/>
    </source>
</evidence>
<evidence type="ECO:0000269" key="2">
    <source>
    </source>
</evidence>
<evidence type="ECO:0000305" key="3"/>
<organism>
    <name type="scientific">Nostoc sp. (strain PCC 7120 / SAG 25.82 / UTEX 2576)</name>
    <dbReference type="NCBI Taxonomy" id="103690"/>
    <lineage>
        <taxon>Bacteria</taxon>
        <taxon>Bacillati</taxon>
        <taxon>Cyanobacteriota</taxon>
        <taxon>Cyanophyceae</taxon>
        <taxon>Nostocales</taxon>
        <taxon>Nostocaceae</taxon>
        <taxon>Nostoc</taxon>
    </lineage>
</organism>
<dbReference type="EMBL" id="U38537">
    <property type="protein sequence ID" value="AAC82961.1"/>
    <property type="molecule type" value="Genomic_DNA"/>
</dbReference>
<dbReference type="EMBL" id="BA000019">
    <property type="protein sequence ID" value="BAB73399.1"/>
    <property type="molecule type" value="Genomic_DNA"/>
</dbReference>
<dbReference type="PIR" id="A24782">
    <property type="entry name" value="A24782"/>
</dbReference>
<dbReference type="PIR" id="AG1986">
    <property type="entry name" value="AG1986"/>
</dbReference>
<dbReference type="STRING" id="103690.gene:10493457"/>
<dbReference type="KEGG" id="ana:alr1442"/>
<dbReference type="eggNOG" id="COG0582">
    <property type="taxonomic scope" value="Bacteria"/>
</dbReference>
<dbReference type="Proteomes" id="UP000002483">
    <property type="component" value="Chromosome"/>
</dbReference>
<dbReference type="GO" id="GO:0003677">
    <property type="term" value="F:DNA binding"/>
    <property type="evidence" value="ECO:0007669"/>
    <property type="project" value="InterPro"/>
</dbReference>
<dbReference type="GO" id="GO:0004519">
    <property type="term" value="F:endonuclease activity"/>
    <property type="evidence" value="ECO:0000314"/>
    <property type="project" value="CACAO"/>
</dbReference>
<dbReference type="GO" id="GO:0015074">
    <property type="term" value="P:DNA integration"/>
    <property type="evidence" value="ECO:0007669"/>
    <property type="project" value="InterPro"/>
</dbReference>
<dbReference type="GO" id="GO:0006310">
    <property type="term" value="P:DNA recombination"/>
    <property type="evidence" value="ECO:0000315"/>
    <property type="project" value="CACAO"/>
</dbReference>
<dbReference type="GO" id="GO:0006281">
    <property type="term" value="P:DNA repair"/>
    <property type="evidence" value="ECO:0007669"/>
    <property type="project" value="UniProtKB-KW"/>
</dbReference>
<dbReference type="GO" id="GO:0043158">
    <property type="term" value="P:heterocyst development"/>
    <property type="evidence" value="ECO:0007669"/>
    <property type="project" value="UniProtKB-KW"/>
</dbReference>
<dbReference type="GO" id="GO:0009399">
    <property type="term" value="P:nitrogen fixation"/>
    <property type="evidence" value="ECO:0000315"/>
    <property type="project" value="CACAO"/>
</dbReference>
<dbReference type="CDD" id="cd00796">
    <property type="entry name" value="INT_Rci_Hp1_C"/>
    <property type="match status" value="1"/>
</dbReference>
<dbReference type="Gene3D" id="1.10.443.10">
    <property type="entry name" value="Intergrase catalytic core"/>
    <property type="match status" value="1"/>
</dbReference>
<dbReference type="InterPro" id="IPR011010">
    <property type="entry name" value="DNA_brk_join_enz"/>
</dbReference>
<dbReference type="InterPro" id="IPR013762">
    <property type="entry name" value="Integrase-like_cat_sf"/>
</dbReference>
<dbReference type="InterPro" id="IPR002104">
    <property type="entry name" value="Integrase_catalytic"/>
</dbReference>
<dbReference type="SUPFAM" id="SSF56349">
    <property type="entry name" value="DNA breaking-rejoining enzymes"/>
    <property type="match status" value="1"/>
</dbReference>
<dbReference type="PROSITE" id="PS51898">
    <property type="entry name" value="TYR_RECOMBINASE"/>
    <property type="match status" value="1"/>
</dbReference>
<name>XISA_NOSS1</name>
<keyword id="KW-0228">DNA excision</keyword>
<keyword id="KW-0233">DNA recombination</keyword>
<keyword id="KW-0364">Heterocyst</keyword>
<keyword id="KW-1185">Reference proteome</keyword>
<protein>
    <recommendedName>
        <fullName>Excisase A</fullName>
    </recommendedName>
    <alternativeName>
        <fullName>NifD element site-specific recombinase</fullName>
    </alternativeName>
</protein>
<feature type="chain" id="PRO_0000066009" description="Excisase A">
    <location>
        <begin position="1"/>
        <end position="472"/>
    </location>
</feature>
<feature type="domain" description="Tyr recombinase" evidence="1">
    <location>
        <begin position="244"/>
        <end position="429"/>
    </location>
</feature>
<feature type="active site" evidence="1">
    <location>
        <position position="287"/>
    </location>
</feature>
<feature type="active site" evidence="1">
    <location>
        <position position="317"/>
    </location>
</feature>
<feature type="active site" evidence="1">
    <location>
        <position position="384"/>
    </location>
</feature>
<feature type="active site" evidence="1">
    <location>
        <position position="407"/>
    </location>
</feature>
<feature type="active site" description="O-(3'-phospho-DNA)-tyrosine intermediate" evidence="1">
    <location>
        <position position="416"/>
    </location>
</feature>
<feature type="sequence conflict" description="In Ref. 1; AAC82961." evidence="3" ref="1">
    <original>L</original>
    <variation>S</variation>
    <location>
        <position position="55"/>
    </location>
</feature>
<feature type="sequence conflict" description="In Ref. 1; AAC82961." evidence="3" ref="1">
    <original>G</original>
    <variation>R</variation>
    <location>
        <position position="82"/>
    </location>
</feature>
<feature type="sequence conflict" description="In Ref. 1; AAC82961." evidence="3" ref="1">
    <original>SE</original>
    <variation>NK</variation>
    <location>
        <begin position="166"/>
        <end position="167"/>
    </location>
</feature>